<name>MDV1_PYRO7</name>
<proteinExistence type="inferred from homology"/>
<comment type="function">
    <text evidence="1">Involved in mitochondrial fission. Acts as an adapter protein required to form mitochondrial fission complexes. Formation of these complexes is required to promote constriction and fission of the mitochondrial compartment at a late step in mitochondrial division (By similarity).</text>
</comment>
<comment type="subcellular location">
    <subcellularLocation>
        <location evidence="1">Mitochondrion outer membrane</location>
        <topology evidence="1">Peripheral membrane protein</topology>
        <orientation evidence="1">Cytoplasmic side</orientation>
    </subcellularLocation>
</comment>
<comment type="similarity">
    <text evidence="4">Belongs to the WD repeat MDV1/CAF4 family.</text>
</comment>
<accession>A4RJV3</accession>
<accession>G4MUW9</accession>
<keyword id="KW-0175">Coiled coil</keyword>
<keyword id="KW-0472">Membrane</keyword>
<keyword id="KW-0496">Mitochondrion</keyword>
<keyword id="KW-1000">Mitochondrion outer membrane</keyword>
<keyword id="KW-1185">Reference proteome</keyword>
<keyword id="KW-0677">Repeat</keyword>
<keyword id="KW-0853">WD repeat</keyword>
<evidence type="ECO:0000250" key="1"/>
<evidence type="ECO:0000255" key="2"/>
<evidence type="ECO:0000256" key="3">
    <source>
        <dbReference type="SAM" id="MobiDB-lite"/>
    </source>
</evidence>
<evidence type="ECO:0000305" key="4"/>
<sequence>MASPEDENPFQDDPGQEDEDGSILSPRGLEAFSRKVTTTASHLMGPVVDPSSSGHYQSAMTEVQKHLRRPNLQRSMFSMARTTPSDLVRSKLSTREIQHRALAHVPDDMLANIPEDDNNSYSLFQGFQASFPELTDEGKKHRRRVSRGRKLLDEGPTTPENGTTGLQKLRKERASMSHELEMLGIRKNMASSEIREIDIKIANLHGMRRIILERLAALEQEETLLEHDLMEVEARVEDAQMLADEAESTAQQSSPRDTDDADAEDNDGFMSQSIYEKIPSAASTPSKSRKPRIVRRKSMAVLHEHFEPGTSIRELRAHQDCITAMDFDAPFGTLVSAAMDDSVKVWDLNAGRCIGSLEGHTASVRALQVEDNILATGSRDATVRLWDLSKAHYDPHGSHYNGGDDDDDAMAFENPDDQPVDPPAGSMADCPLFTLSSHMDEVTALHFKGDTLVSGSSDKTIRQWDLVKGRCVQTLDVMWAAAQASVSLGTGDGAWRQTARSQAEDADFVGAVQVFDAALACGTADGMVRLWDLRSGQVHRNLVGHTGPVTALQFDNMHLVTGSHDRSIRIWDLRTGSIFDAFAYDHPVTSMMFDARRIVSAAGEDVVKVYDKVESRQWDCGAGIKAAEEMKNPPAIVERVRIRDGYMVEGRRDGIVGIWTC</sequence>
<protein>
    <recommendedName>
        <fullName>Mitochondrial division protein 1</fullName>
    </recommendedName>
</protein>
<reference key="1">
    <citation type="journal article" date="2005" name="Nature">
        <title>The genome sequence of the rice blast fungus Magnaporthe grisea.</title>
        <authorList>
            <person name="Dean R.A."/>
            <person name="Talbot N.J."/>
            <person name="Ebbole D.J."/>
            <person name="Farman M.L."/>
            <person name="Mitchell T.K."/>
            <person name="Orbach M.J."/>
            <person name="Thon M.R."/>
            <person name="Kulkarni R."/>
            <person name="Xu J.-R."/>
            <person name="Pan H."/>
            <person name="Read N.D."/>
            <person name="Lee Y.-H."/>
            <person name="Carbone I."/>
            <person name="Brown D."/>
            <person name="Oh Y.Y."/>
            <person name="Donofrio N."/>
            <person name="Jeong J.S."/>
            <person name="Soanes D.M."/>
            <person name="Djonovic S."/>
            <person name="Kolomiets E."/>
            <person name="Rehmeyer C."/>
            <person name="Li W."/>
            <person name="Harding M."/>
            <person name="Kim S."/>
            <person name="Lebrun M.-H."/>
            <person name="Bohnert H."/>
            <person name="Coughlan S."/>
            <person name="Butler J."/>
            <person name="Calvo S.E."/>
            <person name="Ma L.-J."/>
            <person name="Nicol R."/>
            <person name="Purcell S."/>
            <person name="Nusbaum C."/>
            <person name="Galagan J.E."/>
            <person name="Birren B.W."/>
        </authorList>
    </citation>
    <scope>NUCLEOTIDE SEQUENCE [LARGE SCALE GENOMIC DNA]</scope>
    <source>
        <strain>70-15 / ATCC MYA-4617 / FGSC 8958</strain>
    </source>
</reference>
<organism>
    <name type="scientific">Pyricularia oryzae (strain 70-15 / ATCC MYA-4617 / FGSC 8958)</name>
    <name type="common">Rice blast fungus</name>
    <name type="synonym">Magnaporthe oryzae</name>
    <dbReference type="NCBI Taxonomy" id="242507"/>
    <lineage>
        <taxon>Eukaryota</taxon>
        <taxon>Fungi</taxon>
        <taxon>Dikarya</taxon>
        <taxon>Ascomycota</taxon>
        <taxon>Pezizomycotina</taxon>
        <taxon>Sordariomycetes</taxon>
        <taxon>Sordariomycetidae</taxon>
        <taxon>Magnaporthales</taxon>
        <taxon>Pyriculariaceae</taxon>
        <taxon>Pyricularia</taxon>
    </lineage>
</organism>
<dbReference type="EMBL" id="CM001232">
    <property type="protein sequence ID" value="EHA54899.1"/>
    <property type="molecule type" value="Genomic_DNA"/>
</dbReference>
<dbReference type="RefSeq" id="XP_003714706.1">
    <property type="nucleotide sequence ID" value="XM_003714658.1"/>
</dbReference>
<dbReference type="SMR" id="A4RJV3"/>
<dbReference type="FunCoup" id="A4RJV3">
    <property type="interactions" value="43"/>
</dbReference>
<dbReference type="STRING" id="242507.A4RJV3"/>
<dbReference type="EnsemblFungi" id="MGG_01711T0">
    <property type="protein sequence ID" value="MGG_01711T0"/>
    <property type="gene ID" value="MGG_01711"/>
</dbReference>
<dbReference type="GeneID" id="2679351"/>
<dbReference type="KEGG" id="mgr:MGG_01711"/>
<dbReference type="VEuPathDB" id="FungiDB:MGG_01711"/>
<dbReference type="eggNOG" id="KOG4155">
    <property type="taxonomic scope" value="Eukaryota"/>
</dbReference>
<dbReference type="HOGENOM" id="CLU_012350_1_1_1"/>
<dbReference type="InParanoid" id="A4RJV3"/>
<dbReference type="OMA" id="ERLRYMD"/>
<dbReference type="OrthoDB" id="496at2759"/>
<dbReference type="PHI-base" id="PHI:6135"/>
<dbReference type="PHI-base" id="PHI:6636"/>
<dbReference type="Proteomes" id="UP000009058">
    <property type="component" value="Chromosome 2"/>
</dbReference>
<dbReference type="GO" id="GO:0030014">
    <property type="term" value="C:CCR4-NOT complex"/>
    <property type="evidence" value="ECO:0000250"/>
    <property type="project" value="PAMGO_MGG"/>
</dbReference>
<dbReference type="GO" id="GO:0030015">
    <property type="term" value="C:CCR4-NOT core complex"/>
    <property type="evidence" value="ECO:0000250"/>
    <property type="project" value="PAMGO_MGG"/>
</dbReference>
<dbReference type="GO" id="GO:0005741">
    <property type="term" value="C:mitochondrial outer membrane"/>
    <property type="evidence" value="ECO:0000250"/>
    <property type="project" value="PAMGO_MGG"/>
</dbReference>
<dbReference type="GO" id="GO:0005739">
    <property type="term" value="C:mitochondrion"/>
    <property type="evidence" value="ECO:0000250"/>
    <property type="project" value="PAMGO_MGG"/>
</dbReference>
<dbReference type="GO" id="GO:0051020">
    <property type="term" value="F:GTPase binding"/>
    <property type="evidence" value="ECO:0000250"/>
    <property type="project" value="PAMGO_MGG"/>
</dbReference>
<dbReference type="GO" id="GO:0006354">
    <property type="term" value="P:DNA-templated transcription elongation"/>
    <property type="evidence" value="ECO:0000250"/>
    <property type="project" value="PAMGO_MGG"/>
</dbReference>
<dbReference type="GO" id="GO:0006352">
    <property type="term" value="P:DNA-templated transcription initiation"/>
    <property type="evidence" value="ECO:0000250"/>
    <property type="project" value="PAMGO_MGG"/>
</dbReference>
<dbReference type="GO" id="GO:0000266">
    <property type="term" value="P:mitochondrial fission"/>
    <property type="evidence" value="ECO:0000250"/>
    <property type="project" value="PAMGO_MGG"/>
</dbReference>
<dbReference type="GO" id="GO:0000002">
    <property type="term" value="P:mitochondrial genome maintenance"/>
    <property type="evidence" value="ECO:0000250"/>
    <property type="project" value="PAMGO_MGG"/>
</dbReference>
<dbReference type="GO" id="GO:0006402">
    <property type="term" value="P:mRNA catabolic process"/>
    <property type="evidence" value="ECO:0000250"/>
    <property type="project" value="PAMGO_MGG"/>
</dbReference>
<dbReference type="GO" id="GO:0006355">
    <property type="term" value="P:regulation of DNA-templated transcription"/>
    <property type="evidence" value="ECO:0000250"/>
    <property type="project" value="PAMGO_MGG"/>
</dbReference>
<dbReference type="CDD" id="cd22881">
    <property type="entry name" value="Mdv1_N"/>
    <property type="match status" value="1"/>
</dbReference>
<dbReference type="CDD" id="cd00200">
    <property type="entry name" value="WD40"/>
    <property type="match status" value="1"/>
</dbReference>
<dbReference type="FunFam" id="2.130.10.10:FF:000404">
    <property type="entry name" value="Mitochondrial division protein 1"/>
    <property type="match status" value="1"/>
</dbReference>
<dbReference type="FunFam" id="2.130.10.10:FF:002118">
    <property type="entry name" value="Mitochondrial division protein 1"/>
    <property type="match status" value="1"/>
</dbReference>
<dbReference type="Gene3D" id="6.10.280.220">
    <property type="match status" value="1"/>
</dbReference>
<dbReference type="Gene3D" id="2.130.10.10">
    <property type="entry name" value="YVTN repeat-like/Quinoprotein amine dehydrogenase"/>
    <property type="match status" value="2"/>
</dbReference>
<dbReference type="InterPro" id="IPR020472">
    <property type="entry name" value="G-protein_beta_WD-40_rep"/>
</dbReference>
<dbReference type="InterPro" id="IPR015943">
    <property type="entry name" value="WD40/YVTN_repeat-like_dom_sf"/>
</dbReference>
<dbReference type="InterPro" id="IPR019775">
    <property type="entry name" value="WD40_repeat_CS"/>
</dbReference>
<dbReference type="InterPro" id="IPR036322">
    <property type="entry name" value="WD40_repeat_dom_sf"/>
</dbReference>
<dbReference type="InterPro" id="IPR001680">
    <property type="entry name" value="WD40_rpt"/>
</dbReference>
<dbReference type="InterPro" id="IPR050349">
    <property type="entry name" value="WD_LIS1/nudF_dynein_reg"/>
</dbReference>
<dbReference type="PANTHER" id="PTHR44129">
    <property type="entry name" value="WD REPEAT-CONTAINING PROTEIN POP1"/>
    <property type="match status" value="1"/>
</dbReference>
<dbReference type="Pfam" id="PF00400">
    <property type="entry name" value="WD40"/>
    <property type="match status" value="4"/>
</dbReference>
<dbReference type="PRINTS" id="PR00320">
    <property type="entry name" value="GPROTEINBRPT"/>
</dbReference>
<dbReference type="SMART" id="SM00320">
    <property type="entry name" value="WD40"/>
    <property type="match status" value="6"/>
</dbReference>
<dbReference type="SUPFAM" id="SSF50978">
    <property type="entry name" value="WD40 repeat-like"/>
    <property type="match status" value="1"/>
</dbReference>
<dbReference type="PROSITE" id="PS00678">
    <property type="entry name" value="WD_REPEATS_1"/>
    <property type="match status" value="3"/>
</dbReference>
<dbReference type="PROSITE" id="PS50082">
    <property type="entry name" value="WD_REPEATS_2"/>
    <property type="match status" value="5"/>
</dbReference>
<dbReference type="PROSITE" id="PS50294">
    <property type="entry name" value="WD_REPEATS_REGION"/>
    <property type="match status" value="1"/>
</dbReference>
<feature type="chain" id="PRO_0000330107" description="Mitochondrial division protein 1">
    <location>
        <begin position="1"/>
        <end position="661"/>
    </location>
</feature>
<feature type="repeat" description="WD 1">
    <location>
        <begin position="317"/>
        <end position="358"/>
    </location>
</feature>
<feature type="repeat" description="WD 2">
    <location>
        <begin position="359"/>
        <end position="396"/>
    </location>
</feature>
<feature type="repeat" description="WD 3">
    <location>
        <begin position="437"/>
        <end position="476"/>
    </location>
</feature>
<feature type="repeat" description="WD 4">
    <location>
        <begin position="478"/>
        <end position="498"/>
    </location>
</feature>
<feature type="repeat" description="WD 5">
    <location>
        <begin position="499"/>
        <end position="541"/>
    </location>
</feature>
<feature type="repeat" description="WD 6">
    <location>
        <begin position="544"/>
        <end position="583"/>
    </location>
</feature>
<feature type="repeat" description="WD 7">
    <location>
        <begin position="585"/>
        <end position="620"/>
    </location>
</feature>
<feature type="repeat" description="WD 8">
    <location>
        <begin position="622"/>
        <end position="660"/>
    </location>
</feature>
<feature type="region of interest" description="Disordered" evidence="3">
    <location>
        <begin position="1"/>
        <end position="29"/>
    </location>
</feature>
<feature type="region of interest" description="Disordered" evidence="3">
    <location>
        <begin position="135"/>
        <end position="170"/>
    </location>
</feature>
<feature type="region of interest" description="Disordered" evidence="3">
    <location>
        <begin position="244"/>
        <end position="267"/>
    </location>
</feature>
<feature type="region of interest" description="Disordered" evidence="3">
    <location>
        <begin position="275"/>
        <end position="294"/>
    </location>
</feature>
<feature type="region of interest" description="Disordered" evidence="3">
    <location>
        <begin position="397"/>
        <end position="416"/>
    </location>
</feature>
<feature type="coiled-coil region" evidence="2">
    <location>
        <begin position="211"/>
        <end position="254"/>
    </location>
</feature>
<feature type="compositionally biased region" description="Acidic residues" evidence="3">
    <location>
        <begin position="1"/>
        <end position="21"/>
    </location>
</feature>
<feature type="compositionally biased region" description="Basic residues" evidence="3">
    <location>
        <begin position="140"/>
        <end position="149"/>
    </location>
</feature>
<feature type="compositionally biased region" description="Low complexity" evidence="3">
    <location>
        <begin position="154"/>
        <end position="165"/>
    </location>
</feature>
<feature type="compositionally biased region" description="Acidic residues" evidence="3">
    <location>
        <begin position="403"/>
        <end position="416"/>
    </location>
</feature>
<gene>
    <name type="primary">MDV1</name>
    <name type="ORF">MGG_01711</name>
</gene>